<comment type="function">
    <text evidence="2 3">Nonribosomal peptide synthetase; part of the gene cluster that mediates the biosynthesis of siderophore ferrichrome A which is contributing to organismal virulence (PubMed:17138696, PubMed:20070524). The first step of ferrichrome A biosynthesis is performed by the HMG-CoA synthase hcs1 which catalyzes the generation of HMG-CoA and CoA using acetoacetyl-CoA and acetyl-CoA as substrates (PubMed:20070524). The enoyl-CoA isomerase/hydratase fer4 then catalyzes the conversion of hcs1-produced HMG-CoA to methylglutaconyl-CoA (PubMed:20070524). The acyltransferase fer5 then fuses the fer4-generated methylglutaconyl-CoA with sid1-generated hydroxyornithine to yield methylglutaconyl hydroxyornithine (PubMed:20070524). Methylglutaconyl hydroxyornithine is then available for use by the NRPS fer3 to generate ferrichrome A (PubMed:20070524).</text>
</comment>
<comment type="pathway">
    <text evidence="3">Siderophore biosynthesis.</text>
</comment>
<comment type="induction">
    <text evidence="2">Expression regulated by iron through the urbs1 transcription factor (PubMed:17138696).</text>
</comment>
<comment type="domain">
    <text evidence="7">NRP synthetases are composed of discrete domains (adenylation (A), thiolation (T) or peptidyl carrier protein (PCP) and condensation (C) domains) which when grouped together are referred to as a single module. Each module is responsible for the recognition (via the A domain) and incorporation of a single amino acid into the growing peptide product. Thus, an NRP synthetase is generally composed of one or more modules and can terminate in a thioesterase domain (TE) that releases the newly synthesized peptide from the enzyme. Occasionally, epimerase (E) domains (responsible for l- to d- amino acid conversion) are present within the NRP synthetase. Fer3 has the following architecture: A-T-C-A-T-C-A-T-C-T-C-T-C (PubMed:20070524). The lack of corresponding A domains in the 2 last modules suggests that A domains have to be used iteratively to incorporate the six amino acids in ferrichrome A (PubMed:20070524).</text>
</comment>
<comment type="disruption phenotype">
    <text evidence="3">Impairs the production of ferrichrome A but does not affect the production of ferrichrome (PubMed:20070524).</text>
</comment>
<comment type="similarity">
    <text evidence="6">Belongs to the NRP synthetase family.</text>
</comment>
<reference key="1">
    <citation type="journal article" date="2006" name="Nature">
        <title>Insights from the genome of the biotrophic fungal plant pathogen Ustilago maydis.</title>
        <authorList>
            <person name="Kaemper J."/>
            <person name="Kahmann R."/>
            <person name="Boelker M."/>
            <person name="Ma L.-J."/>
            <person name="Brefort T."/>
            <person name="Saville B.J."/>
            <person name="Banuett F."/>
            <person name="Kronstad J.W."/>
            <person name="Gold S.E."/>
            <person name="Mueller O."/>
            <person name="Perlin M.H."/>
            <person name="Woesten H.A.B."/>
            <person name="de Vries R."/>
            <person name="Ruiz-Herrera J."/>
            <person name="Reynaga-Pena C.G."/>
            <person name="Snetselaar K."/>
            <person name="McCann M."/>
            <person name="Perez-Martin J."/>
            <person name="Feldbruegge M."/>
            <person name="Basse C.W."/>
            <person name="Steinberg G."/>
            <person name="Ibeas J.I."/>
            <person name="Holloman W."/>
            <person name="Guzman P."/>
            <person name="Farman M.L."/>
            <person name="Stajich J.E."/>
            <person name="Sentandreu R."/>
            <person name="Gonzalez-Prieto J.M."/>
            <person name="Kennell J.C."/>
            <person name="Molina L."/>
            <person name="Schirawski J."/>
            <person name="Mendoza-Mendoza A."/>
            <person name="Greilinger D."/>
            <person name="Muench K."/>
            <person name="Roessel N."/>
            <person name="Scherer M."/>
            <person name="Vranes M."/>
            <person name="Ladendorf O."/>
            <person name="Vincon V."/>
            <person name="Fuchs U."/>
            <person name="Sandrock B."/>
            <person name="Meng S."/>
            <person name="Ho E.C.H."/>
            <person name="Cahill M.J."/>
            <person name="Boyce K.J."/>
            <person name="Klose J."/>
            <person name="Klosterman S.J."/>
            <person name="Deelstra H.J."/>
            <person name="Ortiz-Castellanos L."/>
            <person name="Li W."/>
            <person name="Sanchez-Alonso P."/>
            <person name="Schreier P.H."/>
            <person name="Haeuser-Hahn I."/>
            <person name="Vaupel M."/>
            <person name="Koopmann E."/>
            <person name="Friedrich G."/>
            <person name="Voss H."/>
            <person name="Schlueter T."/>
            <person name="Margolis J."/>
            <person name="Platt D."/>
            <person name="Swimmer C."/>
            <person name="Gnirke A."/>
            <person name="Chen F."/>
            <person name="Vysotskaia V."/>
            <person name="Mannhaupt G."/>
            <person name="Gueldener U."/>
            <person name="Muensterkoetter M."/>
            <person name="Haase D."/>
            <person name="Oesterheld M."/>
            <person name="Mewes H.-W."/>
            <person name="Mauceli E.W."/>
            <person name="DeCaprio D."/>
            <person name="Wade C.M."/>
            <person name="Butler J."/>
            <person name="Young S.K."/>
            <person name="Jaffe D.B."/>
            <person name="Calvo S.E."/>
            <person name="Nusbaum C."/>
            <person name="Galagan J.E."/>
            <person name="Birren B.W."/>
        </authorList>
    </citation>
    <scope>NUCLEOTIDE SEQUENCE [LARGE SCALE GENOMIC DNA]</scope>
    <source>
        <strain>DSM 14603 / FGSC 9021 / UM521</strain>
    </source>
</reference>
<reference key="2">
    <citation type="submission" date="2014-09" db="EMBL/GenBank/DDBJ databases">
        <authorList>
            <person name="Gueldener U."/>
            <person name="Muensterkoetter M."/>
            <person name="Walter M.C."/>
            <person name="Mannhaupt G."/>
            <person name="Kahmann R."/>
        </authorList>
    </citation>
    <scope>GENOME REANNOTATION</scope>
    <source>
        <strain>DSM 14603 / FGSC 9021 / UM521</strain>
    </source>
</reference>
<reference key="3">
    <citation type="journal article" date="2006" name="Plant Cell">
        <title>A ferroxidation/permeation iron uptake system is required for virulence in Ustilago maydis.</title>
        <authorList>
            <person name="Eichhorn H."/>
            <person name="Lessing F."/>
            <person name="Winterberg B."/>
            <person name="Schirawski J."/>
            <person name="Kamper J."/>
            <person name="Muller P."/>
            <person name="Kahmann R."/>
        </authorList>
    </citation>
    <scope>INDUCTION</scope>
    <scope>FUNCTION</scope>
    <source>
        <strain>DSM 14603 / FGSC 9021 / UM521</strain>
    </source>
</reference>
<reference key="4">
    <citation type="journal article" date="2010" name="Mol. Microbiol.">
        <title>Elucidation of the complete ferrichrome A biosynthetic pathway in Ustilago maydis.</title>
        <authorList>
            <person name="Winterberg B."/>
            <person name="Uhlmann S."/>
            <person name="Linne U."/>
            <person name="Lessing F."/>
            <person name="Marahiel M.A."/>
            <person name="Eichhorn H."/>
            <person name="Kahmann R."/>
            <person name="Schirawski J."/>
        </authorList>
    </citation>
    <scope>FUNCTION</scope>
    <scope>DOMAIN</scope>
    <scope>DISRUPTION PHENOTYPE</scope>
    <scope>PATHWAY</scope>
</reference>
<dbReference type="EC" id="6.3.2.-" evidence="7"/>
<dbReference type="EMBL" id="CM003141">
    <property type="protein sequence ID" value="KIS71541.1"/>
    <property type="molecule type" value="Genomic_DNA"/>
</dbReference>
<dbReference type="EMBL" id="BK004083">
    <property type="protein sequence ID" value="DAA04939.1"/>
    <property type="molecule type" value="Genomic_DNA"/>
</dbReference>
<dbReference type="RefSeq" id="XP_011387303.1">
    <property type="nucleotide sequence ID" value="XM_011389001.1"/>
</dbReference>
<dbReference type="SMR" id="Q4PEM9"/>
<dbReference type="FunCoup" id="Q4PEM9">
    <property type="interactions" value="248"/>
</dbReference>
<dbReference type="STRING" id="237631.Q4PEM9"/>
<dbReference type="EnsemblFungi" id="KIS71541">
    <property type="protein sequence ID" value="KIS71541"/>
    <property type="gene ID" value="UMAG_01434"/>
</dbReference>
<dbReference type="GeneID" id="23562458"/>
<dbReference type="KEGG" id="uma:UMAG_01434"/>
<dbReference type="VEuPathDB" id="FungiDB:UMAG_01434"/>
<dbReference type="eggNOG" id="KOG1176">
    <property type="taxonomic scope" value="Eukaryota"/>
</dbReference>
<dbReference type="eggNOG" id="KOG1178">
    <property type="taxonomic scope" value="Eukaryota"/>
</dbReference>
<dbReference type="HOGENOM" id="CLU_000092_1_0_1"/>
<dbReference type="InParanoid" id="Q4PEM9"/>
<dbReference type="OMA" id="ITMIGEK"/>
<dbReference type="OrthoDB" id="416786at2759"/>
<dbReference type="BioCyc" id="MetaCyc:MONOMER-18966"/>
<dbReference type="Proteomes" id="UP000000561">
    <property type="component" value="Chromosome 2"/>
</dbReference>
<dbReference type="GO" id="GO:0005737">
    <property type="term" value="C:cytoplasm"/>
    <property type="evidence" value="ECO:0000318"/>
    <property type="project" value="GO_Central"/>
</dbReference>
<dbReference type="GO" id="GO:0016874">
    <property type="term" value="F:ligase activity"/>
    <property type="evidence" value="ECO:0007669"/>
    <property type="project" value="UniProtKB-KW"/>
</dbReference>
<dbReference type="GO" id="GO:0031177">
    <property type="term" value="F:phosphopantetheine binding"/>
    <property type="evidence" value="ECO:0000318"/>
    <property type="project" value="GO_Central"/>
</dbReference>
<dbReference type="GO" id="GO:0043041">
    <property type="term" value="P:amino acid activation for nonribosomal peptide biosynthetic process"/>
    <property type="evidence" value="ECO:0000318"/>
    <property type="project" value="GO_Central"/>
</dbReference>
<dbReference type="GO" id="GO:0044550">
    <property type="term" value="P:secondary metabolite biosynthetic process"/>
    <property type="evidence" value="ECO:0000318"/>
    <property type="project" value="GO_Central"/>
</dbReference>
<dbReference type="CDD" id="cd05918">
    <property type="entry name" value="A_NRPS_SidN3_like"/>
    <property type="match status" value="1"/>
</dbReference>
<dbReference type="CDD" id="cd19542">
    <property type="entry name" value="CT_NRPS-like"/>
    <property type="match status" value="4"/>
</dbReference>
<dbReference type="FunFam" id="3.30.559.30:FF:000035">
    <property type="entry name" value="Hydroxamate-type ferrichrome siderophore peptide synthetase"/>
    <property type="match status" value="1"/>
</dbReference>
<dbReference type="FunFam" id="3.30.300.30:FF:000015">
    <property type="entry name" value="Nonribosomal peptide synthase SidD"/>
    <property type="match status" value="1"/>
</dbReference>
<dbReference type="FunFam" id="3.30.300.30:FF:000033">
    <property type="entry name" value="Nonribosomal siderophore peptide synthase SidC"/>
    <property type="match status" value="1"/>
</dbReference>
<dbReference type="FunFam" id="3.30.559.10:FF:000038">
    <property type="entry name" value="Nonribosomal siderophore peptide synthase SidC"/>
    <property type="match status" value="1"/>
</dbReference>
<dbReference type="FunFam" id="3.30.559.30:FF:000014">
    <property type="entry name" value="Nonribosomal siderophore peptide synthase SidC"/>
    <property type="match status" value="1"/>
</dbReference>
<dbReference type="FunFam" id="3.30.559.30:FF:000015">
    <property type="entry name" value="Nonribosomal siderophore peptide synthase SidC"/>
    <property type="match status" value="1"/>
</dbReference>
<dbReference type="FunFam" id="3.40.50.12780:FF:000024">
    <property type="entry name" value="Nonribosomal siderophore peptide synthase SidC"/>
    <property type="match status" value="2"/>
</dbReference>
<dbReference type="FunFam" id="3.30.559.10:FF:000150">
    <property type="entry name" value="Siderophore peptide synthetase fer3"/>
    <property type="match status" value="1"/>
</dbReference>
<dbReference type="Gene3D" id="3.30.300.30">
    <property type="match status" value="3"/>
</dbReference>
<dbReference type="Gene3D" id="1.10.1200.10">
    <property type="entry name" value="ACP-like"/>
    <property type="match status" value="4"/>
</dbReference>
<dbReference type="Gene3D" id="3.30.559.10">
    <property type="entry name" value="Chloramphenicol acetyltransferase-like domain"/>
    <property type="match status" value="5"/>
</dbReference>
<dbReference type="Gene3D" id="3.40.50.12780">
    <property type="entry name" value="N-terminal domain of ligase-like"/>
    <property type="match status" value="3"/>
</dbReference>
<dbReference type="Gene3D" id="3.30.559.30">
    <property type="entry name" value="Nonribosomal peptide synthetase, condensation domain"/>
    <property type="match status" value="5"/>
</dbReference>
<dbReference type="InterPro" id="IPR010071">
    <property type="entry name" value="AA_adenyl_dom"/>
</dbReference>
<dbReference type="InterPro" id="IPR036736">
    <property type="entry name" value="ACP-like_sf"/>
</dbReference>
<dbReference type="InterPro" id="IPR045851">
    <property type="entry name" value="AMP-bd_C_sf"/>
</dbReference>
<dbReference type="InterPro" id="IPR020845">
    <property type="entry name" value="AMP-binding_CS"/>
</dbReference>
<dbReference type="InterPro" id="IPR000873">
    <property type="entry name" value="AMP-dep_synth/lig_dom"/>
</dbReference>
<dbReference type="InterPro" id="IPR042099">
    <property type="entry name" value="ANL_N_sf"/>
</dbReference>
<dbReference type="InterPro" id="IPR023213">
    <property type="entry name" value="CAT-like_dom_sf"/>
</dbReference>
<dbReference type="InterPro" id="IPR001242">
    <property type="entry name" value="Condensatn"/>
</dbReference>
<dbReference type="InterPro" id="IPR020806">
    <property type="entry name" value="PKS_PP-bd"/>
</dbReference>
<dbReference type="InterPro" id="IPR009081">
    <property type="entry name" value="PP-bd_ACP"/>
</dbReference>
<dbReference type="InterPro" id="IPR006162">
    <property type="entry name" value="Ppantetheine_attach_site"/>
</dbReference>
<dbReference type="NCBIfam" id="TIGR01733">
    <property type="entry name" value="AA-adenyl-dom"/>
    <property type="match status" value="1"/>
</dbReference>
<dbReference type="NCBIfam" id="NF003417">
    <property type="entry name" value="PRK04813.1"/>
    <property type="match status" value="3"/>
</dbReference>
<dbReference type="PANTHER" id="PTHR45527:SF1">
    <property type="entry name" value="FATTY ACID SYNTHASE"/>
    <property type="match status" value="1"/>
</dbReference>
<dbReference type="PANTHER" id="PTHR45527">
    <property type="entry name" value="NONRIBOSOMAL PEPTIDE SYNTHETASE"/>
    <property type="match status" value="1"/>
</dbReference>
<dbReference type="Pfam" id="PF00501">
    <property type="entry name" value="AMP-binding"/>
    <property type="match status" value="3"/>
</dbReference>
<dbReference type="Pfam" id="PF00668">
    <property type="entry name" value="Condensation"/>
    <property type="match status" value="5"/>
</dbReference>
<dbReference type="Pfam" id="PF00550">
    <property type="entry name" value="PP-binding"/>
    <property type="match status" value="4"/>
</dbReference>
<dbReference type="SMART" id="SM00823">
    <property type="entry name" value="PKS_PP"/>
    <property type="match status" value="4"/>
</dbReference>
<dbReference type="SUPFAM" id="SSF56801">
    <property type="entry name" value="Acetyl-CoA synthetase-like"/>
    <property type="match status" value="3"/>
</dbReference>
<dbReference type="SUPFAM" id="SSF47336">
    <property type="entry name" value="ACP-like"/>
    <property type="match status" value="4"/>
</dbReference>
<dbReference type="SUPFAM" id="SSF52777">
    <property type="entry name" value="CoA-dependent acyltransferases"/>
    <property type="match status" value="10"/>
</dbReference>
<dbReference type="PROSITE" id="PS00455">
    <property type="entry name" value="AMP_BINDING"/>
    <property type="match status" value="3"/>
</dbReference>
<dbReference type="PROSITE" id="PS50075">
    <property type="entry name" value="CARRIER"/>
    <property type="match status" value="4"/>
</dbReference>
<dbReference type="PROSITE" id="PS00012">
    <property type="entry name" value="PHOSPHOPANTETHEINE"/>
    <property type="match status" value="3"/>
</dbReference>
<evidence type="ECO:0000255" key="1">
    <source>
        <dbReference type="PROSITE-ProRule" id="PRU00258"/>
    </source>
</evidence>
<evidence type="ECO:0000269" key="2">
    <source>
    </source>
</evidence>
<evidence type="ECO:0000269" key="3">
    <source>
    </source>
</evidence>
<evidence type="ECO:0000303" key="4">
    <source>
    </source>
</evidence>
<evidence type="ECO:0000303" key="5">
    <source>
    </source>
</evidence>
<evidence type="ECO:0000305" key="6"/>
<evidence type="ECO:0000305" key="7">
    <source>
    </source>
</evidence>
<feature type="chain" id="PRO_0000441959" description="Siderophore peptide synthetase fer3">
    <location>
        <begin position="1"/>
        <end position="4830"/>
    </location>
</feature>
<feature type="domain" description="Carrier 1" evidence="1">
    <location>
        <begin position="751"/>
        <end position="833"/>
    </location>
</feature>
<feature type="domain" description="Carrier 2" evidence="1">
    <location>
        <begin position="1929"/>
        <end position="2005"/>
    </location>
</feature>
<feature type="domain" description="Carrier 3" evidence="1">
    <location>
        <begin position="3122"/>
        <end position="3198"/>
    </location>
</feature>
<feature type="domain" description="Carrier 4" evidence="1">
    <location>
        <begin position="3685"/>
        <end position="3760"/>
    </location>
</feature>
<feature type="domain" description="Carrier 5" evidence="1">
    <location>
        <begin position="4264"/>
        <end position="4340"/>
    </location>
</feature>
<feature type="region of interest" description="Adenylation 1">
    <location>
        <begin position="197"/>
        <end position="623"/>
    </location>
</feature>
<feature type="region of interest" description="Condensation 1">
    <location>
        <begin position="879"/>
        <end position="1317"/>
    </location>
</feature>
<feature type="region of interest" description="Adenylation 2">
    <location>
        <begin position="1358"/>
        <end position="1781"/>
    </location>
</feature>
<feature type="region of interest" description="Condensation 2">
    <location>
        <begin position="2048"/>
        <end position="2503"/>
    </location>
</feature>
<feature type="region of interest" description="Adenylation 3">
    <location>
        <begin position="2573"/>
        <end position="2977"/>
    </location>
</feature>
<feature type="region of interest" description="Condensation 3">
    <location>
        <begin position="3232"/>
        <end position="3621"/>
    </location>
</feature>
<feature type="region of interest" description="Condensation 4">
    <location>
        <begin position="3779"/>
        <end position="4199"/>
    </location>
</feature>
<feature type="region of interest" description="Condensation 5">
    <location>
        <begin position="4381"/>
        <end position="4708"/>
    </location>
</feature>
<feature type="modified residue" description="O-(pantetheine 4'-phosphoryl)serine" evidence="1">
    <location>
        <position position="788"/>
    </location>
</feature>
<feature type="modified residue" description="O-(pantetheine 4'-phosphoryl)serine" evidence="1">
    <location>
        <position position="1966"/>
    </location>
</feature>
<feature type="modified residue" description="O-(pantetheine 4'-phosphoryl)serine" evidence="1">
    <location>
        <position position="3159"/>
    </location>
</feature>
<feature type="modified residue" description="O-(pantetheine 4'-phosphoryl)serine" evidence="1">
    <location>
        <position position="3720"/>
    </location>
</feature>
<feature type="modified residue" description="O-(pantetheine 4'-phosphoryl)serine" evidence="1">
    <location>
        <position position="4301"/>
    </location>
</feature>
<gene>
    <name evidence="4" type="primary">fer3</name>
    <name type="ORF">UMAG_01434</name>
</gene>
<protein>
    <recommendedName>
        <fullName evidence="4">Siderophore peptide synthetase fer3</fullName>
        <ecNumber evidence="7">6.3.2.-</ecNumber>
    </recommendedName>
    <alternativeName>
        <fullName evidence="4">Fe-regulated protein 3</fullName>
    </alternativeName>
    <alternativeName>
        <fullName evidence="5">Ferrichrome A biosynthesis protein fer3</fullName>
    </alternativeName>
    <alternativeName>
        <fullName evidence="4">Nonribosomal peptide synthetase fer3</fullName>
        <shortName evidence="6">NRPS fer3</shortName>
    </alternativeName>
</protein>
<sequence>MAATTLSRLPALHPYSAVAEPRTLDGTRCFKFMRKSCLEFVKSLVNDEKGEKLISSLAVFVGHLVGCDADEALFKVRFGDGQTRITSAGAVHAQVVDVEASSLPGIAFRFFPPQPTLPKTLDDDLVVTVNSNSDKDVEFVLEFAQTVPSEAGQGIFAYFCKQVLESTLTEDETPLSILNPSPVSKLPEHAQLHDSFLDQAEKFPDRMAVQFLERLDQEDMGQFSKLTYDELKRLATSLAVKLQATHAKTSKPQNRQVVVPMLLCPSLELYVSYLAILMAGFAFCPLPVDAPDARLISLLAQLDTTILLGANSSQPPQWMPASVEWINVTDTLAETDQFAKHLTPAKRMQECAYVLFTSGTTGTPKGVQISHYSASISIFSHAACLDPSLLQLSSNTPGSTFKWFQFASTVFDPSVMEIFVTLSSGGTLCSANRALTLSDLEKVVRLSGADIMMATPSVATLLNPERIPKLKFLWTMGECLNSTVIRRFAAENGRTTLANAYGPTEASVNCTLLQPFPADFRGSIIGAPLPSCSLAVLHDGGDSPSGEKRFQAAPRGVTGELVIGGSHVGIGYLDMPEATADAFTTFAPLGRVYRTRDRARVVWDRDGNPLIEILGRMNAEQVKLSGRRVELGEIDSILQSSHTIQNAASVIWRPPTSQLQSGGGERLVCCIVLAPSAQPQDAEADCKIIADAQLPPHMRPWRYIVLPGLPVTVSGKSDRKQLSKIVAELLSSSAEQGSTKERSSEQNQVNANEDPVTQALIEAICAVCQLDAKSVSMDGDLFELGMDSLSAMRLLQLLRQSKVTATAARQLQVAQILGAKACRDLIPLLSDTTVSRDAEENNVSYPNNTDWSTELRSFEDRCRRSALLGLDERTRMRVQKIFPTTATQSGMLTSFLTRPASIGSKRSYINHTVYHFSSVSEACKFFDAFRTVLQKHDIYRTVFVPVDDKLAPFAQCVLSPASDDDNVSAHTSSTAIDACLKQHLEQIDNAISLEQPPWHLGLLAPPQEDEVEQSVVVLSLMHAIFDGGSLDLLQQEVVSLLRDDALQTSLEVRCTELEATVQHHFTSDLESSRRFWHQRLEGVSRTRFPCANGYKATEQSALGHASEVTELYSRSSMDEIVKQARCQRTSALVLLQTAWNLVLAAYTEDESLNYITSGSVHSGRLDEQTQSCMAPTFNVIPFITRLDQGTGNSATLTSAQLLAEATQASTAGLSHLEIPLGALARSGGMPFDTLFAVQRFDAQTCSNATLPWASISYPVMANDFAVMVEVWPGSKATEKMRLRLTYSLAVLDAPSAQLLLQQYEDILHSLMREPETTTVQQLINGEGLRQSALSVCRGPLASENDDSQTEAQLLHSYFENKAATEPEAIALEFYFNQDSDTDGSMEVQRWTYFELNAQANRLARYLLSVTGKPTLRDLPIPICMERCPELYVGVLATLKAGGAWCPIDVQSPRARQLELIARTKSRVVLVTPNTSADLGEVQADGQPLTIKVNACDTSQFHHLSADNLRPTATPATLAYLIWTSGTTGAPKGVMIEHASAVASMQALQQHVKPLQQDMPPRCLQFSAYTFDVFVQDLFWTWGLGGAIIAATREIMLGSTAELIAASQTSHAHLTPAFAAGLRRDSCPSITSVTFIGEKLTESVAADWTSSCASIDKPNDSIAVYNTYGPAEVTVVATLRQLFGGEKLQSANVGVPMQGVTAIVCKNREQPIRPCAKGSIGELVLAGAQVGRGYLNDKAKTEAAFTYSPEWKQRLYYTGDYVRMLHDGSIEFIGRRDDLVKLGGIRVELSEISAALLSVQERRKQAAVVERVETMMLSRLDRPTKQVISFLACPYLAASTDRGVHGAISEPLLLTSGDAIQLAHQTLNNVRDVLPPYMVPSMVLVLSRIPQTASAKIDRAKLQAAYDSADLAQWVSLLSTTADDPDNPEGEDGDLQCQVIAAISEITGTSTQDINSSSSLVSIGLDSIRAIRLAAKLKQNGTPLPISTLLACSTVRMLIRGLATKTGDGHEVAEEDTRNRLLAVKLSEFDKNVREMLPTGSKQDFEVCIPCSTLQEGMLAETLADPAAYWSDHVLQLDSHIDLARLAEAWRRAAHNIEMLRTVFAVVSQTAGLEEVQFDKNTDVFALQMVHKSVDITLIDVCDPIRVKSDDRLHQAVSKWTRSVAQDRADNVFATPLWKVKTFVVQDDSSSGNDQVPLTYAALCIHHALYDGPSIDIILNRVRDEYSALSPDMLDDHHNIRLLPTTSLSTQSEFAYACVADEQRESILHWEQKLQPRGPAAMLPDLTSVKDLPSDAKSARFIAASRKLQCTSARPQGVGLSALIKSAFAIVLAQYVEAEDQRHVVLGEILSLRNLHATLSTEQGAVGPLLTTQPFSLLLDAALEQKSAASYLQSNVIVHPSMQHRFASLASLAKIMGTRSDQEMFTAMYVYHPRRQPVSVSTKPIWTLLEDRSSEIRVEHSTVLNVFEHDDVEDSLILELSMKEDRISKDMLETLLDQVVSLLTLLLDGAGETLQALLGKVGQDQRELASVSHVPRGSRHAGDGSEVDQGHDPLFWLQHYAKNHPSWLAVVIAAGTPETACINDAELSSWTYAQLNAKADQVARLIRSLDLPSEGPIALCMQRSLISIAVTVAIFKCGRTYLPIDDQLPTERKRLLISDSRCALVVTEGTCLGELEADCISSVLNVSKNDFEQSLAALSHRDDHTELTSIKPRADDGAYLLYTSGSTGKPKGVLVGRANLCSFIDSYAEVVSAECPSTLQLGGKGRYLGLAGRAFDVHLSQMFMSWRFGLALATGERPLLLGDLKATVQTMSITHMSCVPSLLDQCDLVPQEVPSLVFLGVGGEKLTDRVRDTLASSLTVLNAYGPTETTIMCTVNRVHPHSHVRDIGQVLPGNTAVVIDFDDKSRFAPVIRGRAGELCIRGDLVALGYHALDPSQMATSGFVTTPDGTRMYRTGDAARMMADGSLHYLGRRDEQEKIRGQRLELGEVSRCAIAGADESIQATTLICQHESLAKPLLITLIATKTSSTGDQRRDTLPQFLAPSTETGRLAQHVLQYCKQHLPSYMVPDLVVGVSHLTQLAASGKTDVRRLKAWLAAADPTQLFSFEGRGHANAQSGSESNVNRPLSSLEREIASAIRRMLPKCPAEIRPDTSIFDLGIDSLSVIRLAGQLRKEGLAISIGRLRMHPRVQDIAAELSDSKALEVDLSVGVKALESFQARHQDQVQASRVEKVTKVLPCLPSQEGMVAISLSSKDEPVYVARIAVRFNDIQPEATAFAAVSLRRAWRQLSERHSILRTCFDHVDDVTIAQIVLDAVDIQRHIVTTKTQNSTAAIARAILQDITVIPPWRIELDDEAGSEPTFVLHMHHALYDGHSLPLLLNDLARVIQSIDDDGPESHDQQPGVQEMLESILSVSEQRAERFWRNTFADFPVNDPSVWTSIASVQGRAPLRCKATVQLAPLEAAAKTLQVTLSSLVASALGIALCRSLETTAFTVGFVLWGRSLDHVSAESIVAPCLTTVPMPFALCADRGSRHVGELIRACHDWNSSCLAFQHTSMRQIRRWIGSECRGSLVDLLYSFVQAGASNSSELARTWHLDSVEAETDAPAAVEVTADRDRDELRISAMARHLLPHDGLEGMTENLQILLNKIANGTGTNMDLKAAGIPTSSVASKLARELPSHSAVSRPLTAAEEQIRDLAVTMCGVPNTEMLQLDTPFLRIGLDSIVALRFSARLRREHGLQLSAHDVLAAGTIAGLSKLLDQRQAEGRSDATVSSSLDSTAARYKATPLQAGMLNGTLASASHDLYVHHHAVLFKQPLDHDRLQRALQHVVASHDILRTSFHLEGEPSETKNAVNSLSWYAQVTPFESLRSATEIRVVRSDKTASAALKEYGTDFIFDGPEKFNVSPWCAAILHCTSSQDVLVISMHHSLYDGVSLPSMFADLRASYHDLTHELVQRPPFSKAADLIASSAHESEQYWLKTLIEFKQPSLLVKKSSRSSTTPSLYRLDERRLSVSLATLKRLSAELGATPQAIAMLSWSKVLAVAAGQRDVCFGQVVSGRYLNLPGIEDVSGPLINTVPIRINLIDDLASNAVTARDLQERIVAAQPFQHASLGRIQNAWRREHGAHSTFFDTLFVFHNIEGKSSSASSSKSELWTALDPSEGPIQTESSTSTVVTTAASEYPVNISVIQDDDGVQIKAGASDAVGGIDWLPKTLQLFEQVFLDLLERPHRSVGAFPERLAALPLTVGRDGTDKDTSASVGVDAGRRSLSTAEQDIVLRHMAKRLNVDAAIINSCPNLFLLGIDSLLAICISADARSEQVPLTPFDVLSAGTFARLTVATETRSEAPRIGVDDSTDTEREMLVGKEAEQEAIELLKVPSCEVETVLPLLTGQQQHIAQWLQRGRRFLEPTFVYACPSKLDVSKLKSAWNELRRRNAALRTAFVRLKDRRTLVQVVLAENSLVWRDHERGRLGVVDGSNNLDAAAFEAVQRLNASPTDLFRPSARLTLVQGKQSDLVLVTIHHTSYDAWSMRLMADELMQLYHNIDQGKLESMRAPVSFADFIDQTHREALRNRDATASFWETRLRGASATLVCRGATQSLEQTMHVRKPALQDVDTLEAACRARGFGLQVVVILAYARLLSSEVSDTKITSPTFGFYTAGRASAIDGVGNMIGPTTAMQPMTVATAGGDQEDLFERLRAIQTDLVSRAEHQQDYVDLPVAFDAHLNLLWHKPITTSMRPPTDDSNASAPSLLKPYRLPYDSGYFTRHPLMPGNTSVDGDIHEAGAQLYMDVGLDASTKSLSLGARCDRSAMDAQQLEAFCDRFVGELEKIRAAL</sequence>
<proteinExistence type="evidence at transcript level"/>
<name>FER3_MYCMD</name>
<keyword id="KW-0436">Ligase</keyword>
<keyword id="KW-0596">Phosphopantetheine</keyword>
<keyword id="KW-0597">Phosphoprotein</keyword>
<keyword id="KW-1185">Reference proteome</keyword>
<keyword id="KW-0677">Repeat</keyword>
<keyword id="KW-0843">Virulence</keyword>
<accession>Q4PEM9</accession>
<accession>A1A658</accession>
<organism>
    <name type="scientific">Mycosarcoma maydis</name>
    <name type="common">Corn smut fungus</name>
    <name type="synonym">Ustilago maydis</name>
    <dbReference type="NCBI Taxonomy" id="5270"/>
    <lineage>
        <taxon>Eukaryota</taxon>
        <taxon>Fungi</taxon>
        <taxon>Dikarya</taxon>
        <taxon>Basidiomycota</taxon>
        <taxon>Ustilaginomycotina</taxon>
        <taxon>Ustilaginomycetes</taxon>
        <taxon>Ustilaginales</taxon>
        <taxon>Ustilaginaceae</taxon>
        <taxon>Mycosarcoma</taxon>
    </lineage>
</organism>